<proteinExistence type="evidence at protein level"/>
<reference key="1">
    <citation type="journal article" date="1992" name="Nucleic Acids Res.">
        <title>Nucleotide sequence of the phoP gene encoding PhoP, the response regulator of the phosphate regulon of Bacillus subtilis.</title>
        <authorList>
            <person name="Lee J.W."/>
            <person name="Hulett F.M."/>
        </authorList>
    </citation>
    <scope>NUCLEOTIDE SEQUENCE [GENOMIC DNA]</scope>
    <source>
        <strain>168 / JH642</strain>
    </source>
</reference>
<reference key="2">
    <citation type="journal article" date="1987" name="J. Bacteriol.">
        <title>Cloning and nucleotide sequence of phoP, the regulatory gene for alkaline phosphatase and phosphodiesterase in Bacillus subtilis.</title>
        <authorList>
            <person name="Seki T."/>
            <person name="Yoshikawa H."/>
            <person name="Takahashi H."/>
            <person name="Saito H."/>
        </authorList>
    </citation>
    <scope>NUCLEOTIDE SEQUENCE [GENOMIC DNA]</scope>
</reference>
<reference key="3">
    <citation type="journal article" date="1997" name="Microbiology">
        <title>Sequencing and functional annotation of the Bacillus subtilis genes in the 200 kb rrnB-dnaB region.</title>
        <authorList>
            <person name="Lapidus A."/>
            <person name="Galleron N."/>
            <person name="Sorokin A."/>
            <person name="Ehrlich S.D."/>
        </authorList>
    </citation>
    <scope>NUCLEOTIDE SEQUENCE [GENOMIC DNA]</scope>
    <source>
        <strain>168</strain>
    </source>
</reference>
<reference key="4">
    <citation type="journal article" date="1997" name="Nature">
        <title>The complete genome sequence of the Gram-positive bacterium Bacillus subtilis.</title>
        <authorList>
            <person name="Kunst F."/>
            <person name="Ogasawara N."/>
            <person name="Moszer I."/>
            <person name="Albertini A.M."/>
            <person name="Alloni G."/>
            <person name="Azevedo V."/>
            <person name="Bertero M.G."/>
            <person name="Bessieres P."/>
            <person name="Bolotin A."/>
            <person name="Borchert S."/>
            <person name="Borriss R."/>
            <person name="Boursier L."/>
            <person name="Brans A."/>
            <person name="Braun M."/>
            <person name="Brignell S.C."/>
            <person name="Bron S."/>
            <person name="Brouillet S."/>
            <person name="Bruschi C.V."/>
            <person name="Caldwell B."/>
            <person name="Capuano V."/>
            <person name="Carter N.M."/>
            <person name="Choi S.-K."/>
            <person name="Codani J.-J."/>
            <person name="Connerton I.F."/>
            <person name="Cummings N.J."/>
            <person name="Daniel R.A."/>
            <person name="Denizot F."/>
            <person name="Devine K.M."/>
            <person name="Duesterhoeft A."/>
            <person name="Ehrlich S.D."/>
            <person name="Emmerson P.T."/>
            <person name="Entian K.-D."/>
            <person name="Errington J."/>
            <person name="Fabret C."/>
            <person name="Ferrari E."/>
            <person name="Foulger D."/>
            <person name="Fritz C."/>
            <person name="Fujita M."/>
            <person name="Fujita Y."/>
            <person name="Fuma S."/>
            <person name="Galizzi A."/>
            <person name="Galleron N."/>
            <person name="Ghim S.-Y."/>
            <person name="Glaser P."/>
            <person name="Goffeau A."/>
            <person name="Golightly E.J."/>
            <person name="Grandi G."/>
            <person name="Guiseppi G."/>
            <person name="Guy B.J."/>
            <person name="Haga K."/>
            <person name="Haiech J."/>
            <person name="Harwood C.R."/>
            <person name="Henaut A."/>
            <person name="Hilbert H."/>
            <person name="Holsappel S."/>
            <person name="Hosono S."/>
            <person name="Hullo M.-F."/>
            <person name="Itaya M."/>
            <person name="Jones L.-M."/>
            <person name="Joris B."/>
            <person name="Karamata D."/>
            <person name="Kasahara Y."/>
            <person name="Klaerr-Blanchard M."/>
            <person name="Klein C."/>
            <person name="Kobayashi Y."/>
            <person name="Koetter P."/>
            <person name="Koningstein G."/>
            <person name="Krogh S."/>
            <person name="Kumano M."/>
            <person name="Kurita K."/>
            <person name="Lapidus A."/>
            <person name="Lardinois S."/>
            <person name="Lauber J."/>
            <person name="Lazarevic V."/>
            <person name="Lee S.-M."/>
            <person name="Levine A."/>
            <person name="Liu H."/>
            <person name="Masuda S."/>
            <person name="Mauel C."/>
            <person name="Medigue C."/>
            <person name="Medina N."/>
            <person name="Mellado R.P."/>
            <person name="Mizuno M."/>
            <person name="Moestl D."/>
            <person name="Nakai S."/>
            <person name="Noback M."/>
            <person name="Noone D."/>
            <person name="O'Reilly M."/>
            <person name="Ogawa K."/>
            <person name="Ogiwara A."/>
            <person name="Oudega B."/>
            <person name="Park S.-H."/>
            <person name="Parro V."/>
            <person name="Pohl T.M."/>
            <person name="Portetelle D."/>
            <person name="Porwollik S."/>
            <person name="Prescott A.M."/>
            <person name="Presecan E."/>
            <person name="Pujic P."/>
            <person name="Purnelle B."/>
            <person name="Rapoport G."/>
            <person name="Rey M."/>
            <person name="Reynolds S."/>
            <person name="Rieger M."/>
            <person name="Rivolta C."/>
            <person name="Rocha E."/>
            <person name="Roche B."/>
            <person name="Rose M."/>
            <person name="Sadaie Y."/>
            <person name="Sato T."/>
            <person name="Scanlan E."/>
            <person name="Schleich S."/>
            <person name="Schroeter R."/>
            <person name="Scoffone F."/>
            <person name="Sekiguchi J."/>
            <person name="Sekowska A."/>
            <person name="Seror S.J."/>
            <person name="Serror P."/>
            <person name="Shin B.-S."/>
            <person name="Soldo B."/>
            <person name="Sorokin A."/>
            <person name="Tacconi E."/>
            <person name="Takagi T."/>
            <person name="Takahashi H."/>
            <person name="Takemaru K."/>
            <person name="Takeuchi M."/>
            <person name="Tamakoshi A."/>
            <person name="Tanaka T."/>
            <person name="Terpstra P."/>
            <person name="Tognoni A."/>
            <person name="Tosato V."/>
            <person name="Uchiyama S."/>
            <person name="Vandenbol M."/>
            <person name="Vannier F."/>
            <person name="Vassarotti A."/>
            <person name="Viari A."/>
            <person name="Wambutt R."/>
            <person name="Wedler E."/>
            <person name="Wedler H."/>
            <person name="Weitzenegger T."/>
            <person name="Winters P."/>
            <person name="Wipat A."/>
            <person name="Yamamoto H."/>
            <person name="Yamane K."/>
            <person name="Yasumoto K."/>
            <person name="Yata K."/>
            <person name="Yoshida K."/>
            <person name="Yoshikawa H.-F."/>
            <person name="Zumstein E."/>
            <person name="Yoshikawa H."/>
            <person name="Danchin A."/>
        </authorList>
    </citation>
    <scope>NUCLEOTIDE SEQUENCE [LARGE SCALE GENOMIC DNA]</scope>
    <source>
        <strain>168</strain>
    </source>
</reference>
<reference key="5">
    <citation type="journal article" date="2009" name="Microbiology">
        <title>From a consortium sequence to a unified sequence: the Bacillus subtilis 168 reference genome a decade later.</title>
        <authorList>
            <person name="Barbe V."/>
            <person name="Cruveiller S."/>
            <person name="Kunst F."/>
            <person name="Lenoble P."/>
            <person name="Meurice G."/>
            <person name="Sekowska A."/>
            <person name="Vallenet D."/>
            <person name="Wang T."/>
            <person name="Moszer I."/>
            <person name="Medigue C."/>
            <person name="Danchin A."/>
        </authorList>
    </citation>
    <scope>SEQUENCE REVISION TO 124</scope>
</reference>
<reference key="6">
    <citation type="journal article" date="1994" name="J. Bacteriol.">
        <title>Identification of two distinct Bacillus subtilis citrate synthase genes.</title>
        <authorList>
            <person name="Jin S."/>
            <person name="Sonenshein A.L."/>
        </authorList>
    </citation>
    <scope>NUCLEOTIDE SEQUENCE [GENOMIC DNA] OF 1-6</scope>
    <source>
        <strain>168 / SMY</strain>
    </source>
</reference>
<reference key="7">
    <citation type="journal article" date="1988" name="J. Bacteriol.">
        <title>Nucleotide sequence of the Bacillus subtilis phoR gene.</title>
        <authorList>
            <person name="Seki T."/>
            <person name="Yoshikawa H."/>
            <person name="Takahashi H."/>
            <person name="Saito H."/>
        </authorList>
    </citation>
    <scope>NUCLEOTIDE SEQUENCE [GENOMIC DNA] OF 212-240</scope>
</reference>
<name>PHOP_BACSU</name>
<evidence type="ECO:0000255" key="1">
    <source>
        <dbReference type="PROSITE-ProRule" id="PRU00169"/>
    </source>
</evidence>
<evidence type="ECO:0000255" key="2">
    <source>
        <dbReference type="PROSITE-ProRule" id="PRU01091"/>
    </source>
</evidence>
<evidence type="ECO:0000305" key="3"/>
<evidence type="ECO:0007829" key="4">
    <source>
        <dbReference type="PDB" id="1MVO"/>
    </source>
</evidence>
<protein>
    <recommendedName>
        <fullName>Alkaline phosphatase synthesis transcriptional regulatory protein PhoP</fullName>
    </recommendedName>
</protein>
<dbReference type="EMBL" id="X67676">
    <property type="protein sequence ID" value="CAA47908.1"/>
    <property type="molecule type" value="Genomic_DNA"/>
</dbReference>
<dbReference type="EMBL" id="M16775">
    <property type="protein sequence ID" value="AAA22661.1"/>
    <property type="molecule type" value="Genomic_DNA"/>
</dbReference>
<dbReference type="EMBL" id="AF008220">
    <property type="protein sequence ID" value="AAC00348.1"/>
    <property type="molecule type" value="Genomic_DNA"/>
</dbReference>
<dbReference type="EMBL" id="AL009126">
    <property type="protein sequence ID" value="CAB14871.2"/>
    <property type="molecule type" value="Genomic_DNA"/>
</dbReference>
<dbReference type="EMBL" id="U05257">
    <property type="protein sequence ID" value="AAA96344.1"/>
    <property type="molecule type" value="Genomic_DNA"/>
</dbReference>
<dbReference type="EMBL" id="M23549">
    <property type="protein sequence ID" value="AAA22662.1"/>
    <property type="molecule type" value="Genomic_DNA"/>
</dbReference>
<dbReference type="PIR" id="F69676">
    <property type="entry name" value="RGBSAP"/>
</dbReference>
<dbReference type="RefSeq" id="NP_390789.2">
    <property type="nucleotide sequence ID" value="NC_000964.3"/>
</dbReference>
<dbReference type="RefSeq" id="WP_003229442.1">
    <property type="nucleotide sequence ID" value="NZ_OZ025638.1"/>
</dbReference>
<dbReference type="PDB" id="1MVO">
    <property type="method" value="X-ray"/>
    <property type="resolution" value="1.60 A"/>
    <property type="chains" value="A=1-135"/>
</dbReference>
<dbReference type="PDBsum" id="1MVO"/>
<dbReference type="SMR" id="P13792"/>
<dbReference type="FunCoup" id="P13792">
    <property type="interactions" value="448"/>
</dbReference>
<dbReference type="STRING" id="224308.BSU29110"/>
<dbReference type="jPOST" id="P13792"/>
<dbReference type="PaxDb" id="224308-BSU29110"/>
<dbReference type="EnsemblBacteria" id="CAB14871">
    <property type="protein sequence ID" value="CAB14871"/>
    <property type="gene ID" value="BSU_29110"/>
</dbReference>
<dbReference type="GeneID" id="936644"/>
<dbReference type="KEGG" id="bsu:BSU29110"/>
<dbReference type="PATRIC" id="fig|224308.179.peg.3160"/>
<dbReference type="eggNOG" id="COG0745">
    <property type="taxonomic scope" value="Bacteria"/>
</dbReference>
<dbReference type="InParanoid" id="P13792"/>
<dbReference type="OrthoDB" id="9790442at2"/>
<dbReference type="PhylomeDB" id="P13792"/>
<dbReference type="BioCyc" id="BSUB:BSU29110-MONOMER"/>
<dbReference type="EvolutionaryTrace" id="P13792"/>
<dbReference type="Proteomes" id="UP000001570">
    <property type="component" value="Chromosome"/>
</dbReference>
<dbReference type="GO" id="GO:0005829">
    <property type="term" value="C:cytosol"/>
    <property type="evidence" value="ECO:0000318"/>
    <property type="project" value="GO_Central"/>
</dbReference>
<dbReference type="GO" id="GO:0032993">
    <property type="term" value="C:protein-DNA complex"/>
    <property type="evidence" value="ECO:0000318"/>
    <property type="project" value="GO_Central"/>
</dbReference>
<dbReference type="GO" id="GO:0000156">
    <property type="term" value="F:phosphorelay response regulator activity"/>
    <property type="evidence" value="ECO:0000318"/>
    <property type="project" value="GO_Central"/>
</dbReference>
<dbReference type="GO" id="GO:0000976">
    <property type="term" value="F:transcription cis-regulatory region binding"/>
    <property type="evidence" value="ECO:0000318"/>
    <property type="project" value="GO_Central"/>
</dbReference>
<dbReference type="GO" id="GO:0006817">
    <property type="term" value="P:phosphate ion transport"/>
    <property type="evidence" value="ECO:0007669"/>
    <property type="project" value="UniProtKB-KW"/>
</dbReference>
<dbReference type="GO" id="GO:0006355">
    <property type="term" value="P:regulation of DNA-templated transcription"/>
    <property type="evidence" value="ECO:0000318"/>
    <property type="project" value="GO_Central"/>
</dbReference>
<dbReference type="CDD" id="cd19937">
    <property type="entry name" value="REC_OmpR_BsPhoP-like"/>
    <property type="match status" value="1"/>
</dbReference>
<dbReference type="CDD" id="cd00383">
    <property type="entry name" value="trans_reg_C"/>
    <property type="match status" value="1"/>
</dbReference>
<dbReference type="FunFam" id="1.10.10.10:FF:000089">
    <property type="entry name" value="Alkaline phosphatase synthesis response regulator"/>
    <property type="match status" value="1"/>
</dbReference>
<dbReference type="FunFam" id="3.40.50.2300:FF:000001">
    <property type="entry name" value="DNA-binding response regulator PhoB"/>
    <property type="match status" value="1"/>
</dbReference>
<dbReference type="Gene3D" id="3.40.50.2300">
    <property type="match status" value="1"/>
</dbReference>
<dbReference type="Gene3D" id="6.10.250.690">
    <property type="match status" value="1"/>
</dbReference>
<dbReference type="Gene3D" id="1.10.10.10">
    <property type="entry name" value="Winged helix-like DNA-binding domain superfamily/Winged helix DNA-binding domain"/>
    <property type="match status" value="1"/>
</dbReference>
<dbReference type="InterPro" id="IPR011006">
    <property type="entry name" value="CheY-like_superfamily"/>
</dbReference>
<dbReference type="InterPro" id="IPR001867">
    <property type="entry name" value="OmpR/PhoB-type_DNA-bd"/>
</dbReference>
<dbReference type="InterPro" id="IPR016032">
    <property type="entry name" value="Sig_transdc_resp-reg_C-effctor"/>
</dbReference>
<dbReference type="InterPro" id="IPR001789">
    <property type="entry name" value="Sig_transdc_resp-reg_receiver"/>
</dbReference>
<dbReference type="InterPro" id="IPR039420">
    <property type="entry name" value="WalR-like"/>
</dbReference>
<dbReference type="InterPro" id="IPR036388">
    <property type="entry name" value="WH-like_DNA-bd_sf"/>
</dbReference>
<dbReference type="PANTHER" id="PTHR48111:SF73">
    <property type="entry name" value="ALKALINE PHOSPHATASE SYNTHESIS TRANSCRIPTIONAL REGULATORY PROTEIN PHOP"/>
    <property type="match status" value="1"/>
</dbReference>
<dbReference type="PANTHER" id="PTHR48111">
    <property type="entry name" value="REGULATOR OF RPOS"/>
    <property type="match status" value="1"/>
</dbReference>
<dbReference type="Pfam" id="PF00072">
    <property type="entry name" value="Response_reg"/>
    <property type="match status" value="1"/>
</dbReference>
<dbReference type="Pfam" id="PF00486">
    <property type="entry name" value="Trans_reg_C"/>
    <property type="match status" value="1"/>
</dbReference>
<dbReference type="SMART" id="SM00448">
    <property type="entry name" value="REC"/>
    <property type="match status" value="1"/>
</dbReference>
<dbReference type="SMART" id="SM00862">
    <property type="entry name" value="Trans_reg_C"/>
    <property type="match status" value="1"/>
</dbReference>
<dbReference type="SUPFAM" id="SSF46894">
    <property type="entry name" value="C-terminal effector domain of the bipartite response regulators"/>
    <property type="match status" value="1"/>
</dbReference>
<dbReference type="SUPFAM" id="SSF52172">
    <property type="entry name" value="CheY-like"/>
    <property type="match status" value="1"/>
</dbReference>
<dbReference type="PROSITE" id="PS51755">
    <property type="entry name" value="OMPR_PHOB"/>
    <property type="match status" value="1"/>
</dbReference>
<dbReference type="PROSITE" id="PS50110">
    <property type="entry name" value="RESPONSE_REGULATORY"/>
    <property type="match status" value="1"/>
</dbReference>
<comment type="function">
    <text>Member of the two-component regulatory system PhoP/PhoR involved in the regulation of alkaline phosphatase genes phoA and phoB and of phosphodiesterase.</text>
</comment>
<comment type="subcellular location">
    <subcellularLocation>
        <location evidence="3">Cytoplasm</location>
    </subcellularLocation>
</comment>
<comment type="PTM">
    <text evidence="3">Phosphorylated by PhoR.</text>
</comment>
<keyword id="KW-0002">3D-structure</keyword>
<keyword id="KW-0010">Activator</keyword>
<keyword id="KW-0963">Cytoplasm</keyword>
<keyword id="KW-0238">DNA-binding</keyword>
<keyword id="KW-0592">Phosphate transport</keyword>
<keyword id="KW-0597">Phosphoprotein</keyword>
<keyword id="KW-1185">Reference proteome</keyword>
<keyword id="KW-0804">Transcription</keyword>
<keyword id="KW-0805">Transcription regulation</keyword>
<keyword id="KW-0813">Transport</keyword>
<keyword id="KW-0902">Two-component regulatory system</keyword>
<accession>P13792</accession>
<accession>O34804</accession>
<organism>
    <name type="scientific">Bacillus subtilis (strain 168)</name>
    <dbReference type="NCBI Taxonomy" id="224308"/>
    <lineage>
        <taxon>Bacteria</taxon>
        <taxon>Bacillati</taxon>
        <taxon>Bacillota</taxon>
        <taxon>Bacilli</taxon>
        <taxon>Bacillales</taxon>
        <taxon>Bacillaceae</taxon>
        <taxon>Bacillus</taxon>
    </lineage>
</organism>
<sequence length="240" mass="27598">MNKKILVVDDEESIVTLLQYNLERSGYDVITASDGEEALKKAETEKPDLIVLDVMLPKLDGIEVCKQLRQQKLMFPILMLTAKDEEFDKVLGLELGADDYMTKPFSPREVNARVKAILRRSEIAAPSSEMKNDEMEGQIVIGDLKILPDHYEAYFKESQLELTPKEFELLLYLGRHKGRVLTRDLLLSAVWNYDFAGDTRIVDVHISHLRDKIENNTKKPIYIKTIRGLGYKLEEPKMNE</sequence>
<gene>
    <name type="primary">phoP</name>
    <name type="ordered locus">BSU29110</name>
</gene>
<feature type="chain" id="PRO_0000081194" description="Alkaline phosphatase synthesis transcriptional regulatory protein PhoP">
    <location>
        <begin position="1"/>
        <end position="240"/>
    </location>
</feature>
<feature type="domain" description="Response regulatory" evidence="1">
    <location>
        <begin position="4"/>
        <end position="118"/>
    </location>
</feature>
<feature type="DNA-binding region" description="OmpR/PhoB-type" evidence="2">
    <location>
        <begin position="136"/>
        <end position="235"/>
    </location>
</feature>
<feature type="modified residue" description="4-aspartylphosphate" evidence="1">
    <location>
        <position position="53"/>
    </location>
</feature>
<feature type="sequence conflict" description="In Ref. 2; AAA22661 and 3; AAC00348." evidence="3" ref="2 3">
    <original>A</original>
    <variation>R</variation>
    <location>
        <position position="124"/>
    </location>
</feature>
<feature type="sequence conflict" description="In Ref. 2; AAA22661." evidence="3" ref="2">
    <original>Y</original>
    <variation>I</variation>
    <location>
        <position position="154"/>
    </location>
</feature>
<feature type="sequence conflict" description="In Ref. 2; AAA22661." evidence="3" ref="2">
    <original>D</original>
    <variation>PT</variation>
    <location>
        <position position="211"/>
    </location>
</feature>
<feature type="strand" evidence="4">
    <location>
        <begin position="4"/>
        <end position="8"/>
    </location>
</feature>
<feature type="helix" evidence="4">
    <location>
        <begin position="12"/>
        <end position="24"/>
    </location>
</feature>
<feature type="strand" evidence="4">
    <location>
        <begin position="28"/>
        <end position="34"/>
    </location>
</feature>
<feature type="helix" evidence="4">
    <location>
        <begin position="35"/>
        <end position="45"/>
    </location>
</feature>
<feature type="strand" evidence="4">
    <location>
        <begin position="48"/>
        <end position="55"/>
    </location>
</feature>
<feature type="strand" evidence="4">
    <location>
        <begin position="57"/>
        <end position="59"/>
    </location>
</feature>
<feature type="helix" evidence="4">
    <location>
        <begin position="61"/>
        <end position="70"/>
    </location>
</feature>
<feature type="strand" evidence="4">
    <location>
        <begin position="77"/>
        <end position="81"/>
    </location>
</feature>
<feature type="helix" evidence="4">
    <location>
        <begin position="89"/>
        <end position="94"/>
    </location>
</feature>
<feature type="strand" evidence="4">
    <location>
        <begin position="99"/>
        <end position="104"/>
    </location>
</feature>
<feature type="helix" evidence="4">
    <location>
        <begin position="107"/>
        <end position="119"/>
    </location>
</feature>